<proteinExistence type="inferred from homology"/>
<comment type="function">
    <text>Part of the binding-protein-dependent transport system for alpha-glucosides such as sucrose, maltose and trehalose.</text>
</comment>
<comment type="subcellular location">
    <subcellularLocation>
        <location evidence="2">Periplasm</location>
    </subcellularLocation>
</comment>
<comment type="similarity">
    <text evidence="2">Belongs to the bacterial solute-binding protein 1 family.</text>
</comment>
<comment type="sequence caution" evidence="2">
    <conflict type="erroneous initiation">
        <sequence resource="EMBL-CDS" id="AAD12050"/>
    </conflict>
</comment>
<keyword id="KW-0574">Periplasm</keyword>
<keyword id="KW-1185">Reference proteome</keyword>
<keyword id="KW-0732">Signal</keyword>
<keyword id="KW-0762">Sugar transport</keyword>
<keyword id="KW-0813">Transport</keyword>
<dbReference type="EMBL" id="AF045609">
    <property type="protein sequence ID" value="AAD12050.1"/>
    <property type="status" value="ALT_INIT"/>
    <property type="molecule type" value="Genomic_DNA"/>
</dbReference>
<dbReference type="EMBL" id="AL591688">
    <property type="protein sequence ID" value="CAC45267.1"/>
    <property type="molecule type" value="Genomic_DNA"/>
</dbReference>
<dbReference type="RefSeq" id="NP_384801.1">
    <property type="nucleotide sequence ID" value="NC_003047.1"/>
</dbReference>
<dbReference type="RefSeq" id="WP_010968756.1">
    <property type="nucleotide sequence ID" value="NC_003047.1"/>
</dbReference>
<dbReference type="SMR" id="Q9Z3R5"/>
<dbReference type="TCDB" id="3.A.1.1.8">
    <property type="family name" value="the atp-binding cassette (abc) superfamily"/>
</dbReference>
<dbReference type="EnsemblBacteria" id="CAC45267">
    <property type="protein sequence ID" value="CAC45267"/>
    <property type="gene ID" value="SMc03061"/>
</dbReference>
<dbReference type="KEGG" id="sme:SMc03061"/>
<dbReference type="PATRIC" id="fig|266834.11.peg.2070"/>
<dbReference type="eggNOG" id="COG1653">
    <property type="taxonomic scope" value="Bacteria"/>
</dbReference>
<dbReference type="HOGENOM" id="CLU_027068_0_0_5"/>
<dbReference type="OrthoDB" id="8663148at2"/>
<dbReference type="Proteomes" id="UP000001976">
    <property type="component" value="Chromosome"/>
</dbReference>
<dbReference type="GO" id="GO:0042597">
    <property type="term" value="C:periplasmic space"/>
    <property type="evidence" value="ECO:0007669"/>
    <property type="project" value="UniProtKB-SubCell"/>
</dbReference>
<dbReference type="Gene3D" id="3.40.190.10">
    <property type="entry name" value="Periplasmic binding protein-like II"/>
    <property type="match status" value="2"/>
</dbReference>
<dbReference type="InterPro" id="IPR050490">
    <property type="entry name" value="Bact_solute-bd_prot1"/>
</dbReference>
<dbReference type="InterPro" id="IPR006059">
    <property type="entry name" value="SBP"/>
</dbReference>
<dbReference type="PANTHER" id="PTHR43649">
    <property type="entry name" value="ARABINOSE-BINDING PROTEIN-RELATED"/>
    <property type="match status" value="1"/>
</dbReference>
<dbReference type="PANTHER" id="PTHR43649:SF29">
    <property type="entry name" value="OSMOPROTECTIVE COMPOUNDS-BINDING PROTEIN GGTB"/>
    <property type="match status" value="1"/>
</dbReference>
<dbReference type="Pfam" id="PF01547">
    <property type="entry name" value="SBP_bac_1"/>
    <property type="match status" value="1"/>
</dbReference>
<dbReference type="SUPFAM" id="SSF53850">
    <property type="entry name" value="Periplasmic binding protein-like II"/>
    <property type="match status" value="1"/>
</dbReference>
<accession>Q9Z3R5</accession>
<organism>
    <name type="scientific">Rhizobium meliloti (strain 1021)</name>
    <name type="common">Ensifer meliloti</name>
    <name type="synonym">Sinorhizobium meliloti</name>
    <dbReference type="NCBI Taxonomy" id="266834"/>
    <lineage>
        <taxon>Bacteria</taxon>
        <taxon>Pseudomonadati</taxon>
        <taxon>Pseudomonadota</taxon>
        <taxon>Alphaproteobacteria</taxon>
        <taxon>Hyphomicrobiales</taxon>
        <taxon>Rhizobiaceae</taxon>
        <taxon>Sinorhizobium/Ensifer group</taxon>
        <taxon>Sinorhizobium</taxon>
    </lineage>
</organism>
<protein>
    <recommendedName>
        <fullName>Alpha-glucosides-binding periplasmic protein AglE</fullName>
    </recommendedName>
</protein>
<evidence type="ECO:0000255" key="1"/>
<evidence type="ECO:0000305" key="2"/>
<feature type="signal peptide" evidence="1">
    <location>
        <begin position="1"/>
        <end position="27"/>
    </location>
</feature>
<feature type="chain" id="PRO_0000031687" description="Alpha-glucosides-binding periplasmic protein AglE">
    <location>
        <begin position="28"/>
        <end position="458"/>
    </location>
</feature>
<name>AGLE_RHIME</name>
<sequence>MKRSLLIGVAAFALLAGTAGLAGTAGAADLKFKPGEDSRFNWASLEEFKKGHDLKGQTLTIFGPWRGEDEALFKSVYAYFVEATGVELKYSSSENYEQQIVIDTQAGSPPDVAILPQPGLIADLAAKGLLTPLGDETKQWLLDNYAAGQSWVDLSTYNGKDGTSALYAFPYKIDVKSLVWYVPENFEDAGYEVPKTMEELKALTEKIAEDGEKPWCIGLGSGGATGWPATDWVEDLMLRTQPAETYDKWVKNEIPFTDAAVTGALEEFGWFARNDAFVDGGAAAVASTDFRDSPKGLFSSPPKCYLHHQASFIPSFFPEGKVVGEDADFFYMPPYESKKELGNPVLGAGTLAMITKDTPAARAFIEFLKTPIAHEVWMAQTSFLTPYKSVNVDVYGNPPLKKQGEILLNATTFRFDGSDLMPGKIGAGAFWTGMVDFVGGKSSADVAAGVQKAWDSIK</sequence>
<reference key="1">
    <citation type="journal article" date="1999" name="J. Bacteriol.">
        <title>A novel Sinorhizobium meliloti operon encodes an alpha-glucosidase and a periplasmic-binding-protein-dependent transport system for alpha-glucosides.</title>
        <authorList>
            <person name="Willis L.B."/>
            <person name="Walker G.C."/>
        </authorList>
    </citation>
    <scope>NUCLEOTIDE SEQUENCE [GENOMIC DNA]</scope>
</reference>
<reference key="2">
    <citation type="journal article" date="2001" name="Proc. Natl. Acad. Sci. U.S.A.">
        <title>Analysis of the chromosome sequence of the legume symbiont Sinorhizobium meliloti strain 1021.</title>
        <authorList>
            <person name="Capela D."/>
            <person name="Barloy-Hubler F."/>
            <person name="Gouzy J."/>
            <person name="Bothe G."/>
            <person name="Ampe F."/>
            <person name="Batut J."/>
            <person name="Boistard P."/>
            <person name="Becker A."/>
            <person name="Boutry M."/>
            <person name="Cadieu E."/>
            <person name="Dreano S."/>
            <person name="Gloux S."/>
            <person name="Godrie T."/>
            <person name="Goffeau A."/>
            <person name="Kahn D."/>
            <person name="Kiss E."/>
            <person name="Lelaure V."/>
            <person name="Masuy D."/>
            <person name="Pohl T."/>
            <person name="Portetelle D."/>
            <person name="Puehler A."/>
            <person name="Purnelle B."/>
            <person name="Ramsperger U."/>
            <person name="Renard C."/>
            <person name="Thebault P."/>
            <person name="Vandenbol M."/>
            <person name="Weidner S."/>
            <person name="Galibert F."/>
        </authorList>
    </citation>
    <scope>NUCLEOTIDE SEQUENCE [LARGE SCALE GENOMIC DNA]</scope>
    <source>
        <strain>1021</strain>
    </source>
</reference>
<reference key="3">
    <citation type="journal article" date="2001" name="Science">
        <title>The composite genome of the legume symbiont Sinorhizobium meliloti.</title>
        <authorList>
            <person name="Galibert F."/>
            <person name="Finan T.M."/>
            <person name="Long S.R."/>
            <person name="Puehler A."/>
            <person name="Abola P."/>
            <person name="Ampe F."/>
            <person name="Barloy-Hubler F."/>
            <person name="Barnett M.J."/>
            <person name="Becker A."/>
            <person name="Boistard P."/>
            <person name="Bothe G."/>
            <person name="Boutry M."/>
            <person name="Bowser L."/>
            <person name="Buhrmester J."/>
            <person name="Cadieu E."/>
            <person name="Capela D."/>
            <person name="Chain P."/>
            <person name="Cowie A."/>
            <person name="Davis R.W."/>
            <person name="Dreano S."/>
            <person name="Federspiel N.A."/>
            <person name="Fisher R.F."/>
            <person name="Gloux S."/>
            <person name="Godrie T."/>
            <person name="Goffeau A."/>
            <person name="Golding B."/>
            <person name="Gouzy J."/>
            <person name="Gurjal M."/>
            <person name="Hernandez-Lucas I."/>
            <person name="Hong A."/>
            <person name="Huizar L."/>
            <person name="Hyman R.W."/>
            <person name="Jones T."/>
            <person name="Kahn D."/>
            <person name="Kahn M.L."/>
            <person name="Kalman S."/>
            <person name="Keating D.H."/>
            <person name="Kiss E."/>
            <person name="Komp C."/>
            <person name="Lelaure V."/>
            <person name="Masuy D."/>
            <person name="Palm C."/>
            <person name="Peck M.C."/>
            <person name="Pohl T.M."/>
            <person name="Portetelle D."/>
            <person name="Purnelle B."/>
            <person name="Ramsperger U."/>
            <person name="Surzycki R."/>
            <person name="Thebault P."/>
            <person name="Vandenbol M."/>
            <person name="Vorhoelter F.J."/>
            <person name="Weidner S."/>
            <person name="Wells D.H."/>
            <person name="Wong K."/>
            <person name="Yeh K.-C."/>
            <person name="Batut J."/>
        </authorList>
    </citation>
    <scope>NUCLEOTIDE SEQUENCE [LARGE SCALE GENOMIC DNA]</scope>
    <source>
        <strain>1021</strain>
    </source>
</reference>
<gene>
    <name type="primary">aglE</name>
    <name type="ordered locus">R00695</name>
    <name type="ORF">SMc03061</name>
</gene>